<dbReference type="EC" id="3.4.21.91"/>
<dbReference type="EC" id="3.6.1.15" evidence="11"/>
<dbReference type="EC" id="3.6.4.13" evidence="11"/>
<dbReference type="EC" id="2.1.1.56" evidence="18"/>
<dbReference type="EC" id="2.1.1.57" evidence="18"/>
<dbReference type="EC" id="2.7.7.48" evidence="14"/>
<dbReference type="EMBL" id="AY762085">
    <property type="protein sequence ID" value="AAV31422.1"/>
    <property type="molecule type" value="Genomic_RNA"/>
</dbReference>
<dbReference type="BMRB" id="Q5UCB8"/>
<dbReference type="SMR" id="Q5UCB8"/>
<dbReference type="MEROPS" id="S07.001"/>
<dbReference type="PRO" id="PR:Q5UCB8"/>
<dbReference type="Proteomes" id="UP000007202">
    <property type="component" value="Genome"/>
</dbReference>
<dbReference type="GO" id="GO:0005576">
    <property type="term" value="C:extracellular region"/>
    <property type="evidence" value="ECO:0007669"/>
    <property type="project" value="UniProtKB-SubCell"/>
</dbReference>
<dbReference type="GO" id="GO:0044167">
    <property type="term" value="C:host cell endoplasmic reticulum membrane"/>
    <property type="evidence" value="ECO:0007669"/>
    <property type="project" value="UniProtKB-SubCell"/>
</dbReference>
<dbReference type="GO" id="GO:0033650">
    <property type="term" value="C:host cell mitochondrion"/>
    <property type="evidence" value="ECO:0007669"/>
    <property type="project" value="UniProtKB-SubCell"/>
</dbReference>
<dbReference type="GO" id="GO:0042025">
    <property type="term" value="C:host cell nucleus"/>
    <property type="evidence" value="ECO:0007669"/>
    <property type="project" value="UniProtKB-SubCell"/>
</dbReference>
<dbReference type="GO" id="GO:0044220">
    <property type="term" value="C:host cell perinuclear region of cytoplasm"/>
    <property type="evidence" value="ECO:0007669"/>
    <property type="project" value="UniProtKB-SubCell"/>
</dbReference>
<dbReference type="GO" id="GO:0016020">
    <property type="term" value="C:membrane"/>
    <property type="evidence" value="ECO:0007669"/>
    <property type="project" value="UniProtKB-KW"/>
</dbReference>
<dbReference type="GO" id="GO:0019028">
    <property type="term" value="C:viral capsid"/>
    <property type="evidence" value="ECO:0007669"/>
    <property type="project" value="UniProtKB-KW"/>
</dbReference>
<dbReference type="GO" id="GO:0019031">
    <property type="term" value="C:viral envelope"/>
    <property type="evidence" value="ECO:0007669"/>
    <property type="project" value="UniProtKB-KW"/>
</dbReference>
<dbReference type="GO" id="GO:0055036">
    <property type="term" value="C:virion membrane"/>
    <property type="evidence" value="ECO:0007669"/>
    <property type="project" value="UniProtKB-SubCell"/>
</dbReference>
<dbReference type="GO" id="GO:0005524">
    <property type="term" value="F:ATP binding"/>
    <property type="evidence" value="ECO:0007669"/>
    <property type="project" value="UniProtKB-KW"/>
</dbReference>
<dbReference type="GO" id="GO:0016887">
    <property type="term" value="F:ATP hydrolysis activity"/>
    <property type="evidence" value="ECO:0007669"/>
    <property type="project" value="RHEA"/>
</dbReference>
<dbReference type="GO" id="GO:0015267">
    <property type="term" value="F:channel activity"/>
    <property type="evidence" value="ECO:0007669"/>
    <property type="project" value="UniProtKB-KW"/>
</dbReference>
<dbReference type="GO" id="GO:0003725">
    <property type="term" value="F:double-stranded RNA binding"/>
    <property type="evidence" value="ECO:0007669"/>
    <property type="project" value="InterPro"/>
</dbReference>
<dbReference type="GO" id="GO:0046872">
    <property type="term" value="F:metal ion binding"/>
    <property type="evidence" value="ECO:0007669"/>
    <property type="project" value="UniProtKB-KW"/>
</dbReference>
<dbReference type="GO" id="GO:0004483">
    <property type="term" value="F:mRNA (nucleoside-2'-O-)-methyltransferase activity"/>
    <property type="evidence" value="ECO:0007669"/>
    <property type="project" value="UniProtKB-EC"/>
</dbReference>
<dbReference type="GO" id="GO:0004482">
    <property type="term" value="F:mRNA 5'-cap (guanine-N7-)-methyltransferase activity"/>
    <property type="evidence" value="ECO:0007669"/>
    <property type="project" value="UniProtKB-EC"/>
</dbReference>
<dbReference type="GO" id="GO:0046983">
    <property type="term" value="F:protein dimerization activity"/>
    <property type="evidence" value="ECO:0007669"/>
    <property type="project" value="InterPro"/>
</dbReference>
<dbReference type="GO" id="GO:0003724">
    <property type="term" value="F:RNA helicase activity"/>
    <property type="evidence" value="ECO:0007669"/>
    <property type="project" value="UniProtKB-EC"/>
</dbReference>
<dbReference type="GO" id="GO:0003968">
    <property type="term" value="F:RNA-directed RNA polymerase activity"/>
    <property type="evidence" value="ECO:0007669"/>
    <property type="project" value="UniProtKB-KW"/>
</dbReference>
<dbReference type="GO" id="GO:0004252">
    <property type="term" value="F:serine-type endopeptidase activity"/>
    <property type="evidence" value="ECO:0007669"/>
    <property type="project" value="InterPro"/>
</dbReference>
<dbReference type="GO" id="GO:0005198">
    <property type="term" value="F:structural molecule activity"/>
    <property type="evidence" value="ECO:0007669"/>
    <property type="project" value="InterPro"/>
</dbReference>
<dbReference type="GO" id="GO:0075512">
    <property type="term" value="P:clathrin-dependent endocytosis of virus by host cell"/>
    <property type="evidence" value="ECO:0007669"/>
    <property type="project" value="UniProtKB-KW"/>
</dbReference>
<dbReference type="GO" id="GO:0039654">
    <property type="term" value="P:fusion of virus membrane with host endosome membrane"/>
    <property type="evidence" value="ECO:0007669"/>
    <property type="project" value="UniProtKB-KW"/>
</dbReference>
<dbReference type="GO" id="GO:0034220">
    <property type="term" value="P:monoatomic ion transmembrane transport"/>
    <property type="evidence" value="ECO:0007669"/>
    <property type="project" value="UniProtKB-KW"/>
</dbReference>
<dbReference type="GO" id="GO:0006508">
    <property type="term" value="P:proteolysis"/>
    <property type="evidence" value="ECO:0007669"/>
    <property type="project" value="UniProtKB-KW"/>
</dbReference>
<dbReference type="GO" id="GO:0039520">
    <property type="term" value="P:symbiont-mediated activation of host autophagy"/>
    <property type="evidence" value="ECO:0007669"/>
    <property type="project" value="UniProtKB-KW"/>
</dbReference>
<dbReference type="GO" id="GO:0039545">
    <property type="term" value="P:symbiont-mediated suppression of host cytoplasmic pattern recognition receptor signaling pathway via inhibition of MAVS activity"/>
    <property type="evidence" value="ECO:0007669"/>
    <property type="project" value="UniProtKB-KW"/>
</dbReference>
<dbReference type="GO" id="GO:0039574">
    <property type="term" value="P:symbiont-mediated suppression of host JAK-STAT cascade via inhibition of host TYK2 activity"/>
    <property type="evidence" value="ECO:0007669"/>
    <property type="project" value="UniProtKB-KW"/>
</dbReference>
<dbReference type="GO" id="GO:0039564">
    <property type="term" value="P:symbiont-mediated suppression of host JAK-STAT cascade via inhibition of STAT2 activity"/>
    <property type="evidence" value="ECO:0007669"/>
    <property type="project" value="UniProtKB-KW"/>
</dbReference>
<dbReference type="GO" id="GO:0039502">
    <property type="term" value="P:symbiont-mediated suppression of host type I interferon-mediated signaling pathway"/>
    <property type="evidence" value="ECO:0007669"/>
    <property type="project" value="UniProtKB-KW"/>
</dbReference>
<dbReference type="GO" id="GO:0039694">
    <property type="term" value="P:viral RNA genome replication"/>
    <property type="evidence" value="ECO:0007669"/>
    <property type="project" value="InterPro"/>
</dbReference>
<dbReference type="GO" id="GO:0019062">
    <property type="term" value="P:virion attachment to host cell"/>
    <property type="evidence" value="ECO:0007669"/>
    <property type="project" value="UniProtKB-KW"/>
</dbReference>
<dbReference type="CDD" id="cd20761">
    <property type="entry name" value="capping_2-OMTase_Flaviviridae"/>
    <property type="match status" value="1"/>
</dbReference>
<dbReference type="CDD" id="cd17931">
    <property type="entry name" value="DEXHc_viral_Ns3"/>
    <property type="match status" value="1"/>
</dbReference>
<dbReference type="CDD" id="cd12149">
    <property type="entry name" value="Flavi_E_C"/>
    <property type="match status" value="1"/>
</dbReference>
<dbReference type="CDD" id="cd17038">
    <property type="entry name" value="Flavi_M"/>
    <property type="match status" value="1"/>
</dbReference>
<dbReference type="CDD" id="cd23204">
    <property type="entry name" value="Flavivirus_RdRp"/>
    <property type="match status" value="1"/>
</dbReference>
<dbReference type="CDD" id="cd18806">
    <property type="entry name" value="SF2_C_viral"/>
    <property type="match status" value="1"/>
</dbReference>
<dbReference type="FunFam" id="1.20.1280.260:FF:000001">
    <property type="entry name" value="Envelope glycoprotein"/>
    <property type="match status" value="1"/>
</dbReference>
<dbReference type="FunFam" id="2.60.40.350:FF:000001">
    <property type="entry name" value="Envelope glycoprotein"/>
    <property type="match status" value="1"/>
</dbReference>
<dbReference type="FunFam" id="1.10.10.930:FF:000001">
    <property type="entry name" value="Genome polyprotein"/>
    <property type="match status" value="1"/>
</dbReference>
<dbReference type="FunFam" id="1.10.260.90:FF:000001">
    <property type="entry name" value="Genome polyprotein"/>
    <property type="match status" value="1"/>
</dbReference>
<dbReference type="FunFam" id="1.10.8.970:FF:000002">
    <property type="entry name" value="Genome polyprotein"/>
    <property type="match status" value="1"/>
</dbReference>
<dbReference type="FunFam" id="2.60.260.50:FF:000001">
    <property type="entry name" value="Genome polyprotein"/>
    <property type="match status" value="1"/>
</dbReference>
<dbReference type="FunFam" id="3.30.70.2840:FF:000001">
    <property type="entry name" value="Genome polyprotein"/>
    <property type="match status" value="1"/>
</dbReference>
<dbReference type="FunFam" id="3.30.70.2840:FF:000002">
    <property type="entry name" value="Genome polyprotein"/>
    <property type="match status" value="1"/>
</dbReference>
<dbReference type="FunFam" id="3.30.70.2840:FF:000004">
    <property type="entry name" value="Genome polyprotein"/>
    <property type="match status" value="1"/>
</dbReference>
<dbReference type="FunFam" id="3.40.50.150:FF:000105">
    <property type="entry name" value="Genome polyprotein"/>
    <property type="match status" value="1"/>
</dbReference>
<dbReference type="FunFam" id="3.40.50.300:FF:000763">
    <property type="entry name" value="Genome polyprotein"/>
    <property type="match status" value="1"/>
</dbReference>
<dbReference type="Gene3D" id="1.10.10.930">
    <property type="match status" value="1"/>
</dbReference>
<dbReference type="Gene3D" id="1.10.260.90">
    <property type="match status" value="1"/>
</dbReference>
<dbReference type="Gene3D" id="1.20.1280.260">
    <property type="match status" value="1"/>
</dbReference>
<dbReference type="Gene3D" id="2.40.10.120">
    <property type="match status" value="2"/>
</dbReference>
<dbReference type="Gene3D" id="2.60.40.350">
    <property type="match status" value="1"/>
</dbReference>
<dbReference type="Gene3D" id="1.10.8.970">
    <property type="entry name" value="Flavivirus envelope glycoprotein M-like"/>
    <property type="match status" value="1"/>
</dbReference>
<dbReference type="Gene3D" id="2.60.260.50">
    <property type="entry name" value="Flavivirus polyprotein propeptide domain"/>
    <property type="match status" value="1"/>
</dbReference>
<dbReference type="Gene3D" id="3.30.70.2840">
    <property type="entry name" value="Flavivirus RNA-directed RNA polymerase, thumb domain"/>
    <property type="match status" value="3"/>
</dbReference>
<dbReference type="Gene3D" id="3.40.50.300">
    <property type="entry name" value="P-loop containing nucleotide triphosphate hydrolases"/>
    <property type="match status" value="2"/>
</dbReference>
<dbReference type="Gene3D" id="2.60.98.10">
    <property type="entry name" value="Tick-borne Encephalitis virus Glycoprotein, domain 1"/>
    <property type="match status" value="1"/>
</dbReference>
<dbReference type="Gene3D" id="2.40.10.10">
    <property type="entry name" value="Trypsin-like serine proteases"/>
    <property type="match status" value="1"/>
</dbReference>
<dbReference type="Gene3D" id="3.40.50.150">
    <property type="entry name" value="Vaccinia Virus protein VP39"/>
    <property type="match status" value="1"/>
</dbReference>
<dbReference type="Gene3D" id="3.30.67.10">
    <property type="entry name" value="Viral Envelope Glycoprotein, domain 2"/>
    <property type="match status" value="1"/>
</dbReference>
<dbReference type="Gene3D" id="3.30.387.10">
    <property type="entry name" value="Viral Envelope Glycoprotein, domain 3"/>
    <property type="match status" value="1"/>
</dbReference>
<dbReference type="InterPro" id="IPR043502">
    <property type="entry name" value="DNA/RNA_pol_sf"/>
</dbReference>
<dbReference type="InterPro" id="IPR000069">
    <property type="entry name" value="Env_glycoprot_M_flavivir"/>
</dbReference>
<dbReference type="InterPro" id="IPR038302">
    <property type="entry name" value="Env_glycoprot_M_sf_flavivir"/>
</dbReference>
<dbReference type="InterPro" id="IPR013755">
    <property type="entry name" value="Flav_gly_cen_dom_subdom1"/>
</dbReference>
<dbReference type="InterPro" id="IPR001122">
    <property type="entry name" value="Flavi_capsidC"/>
</dbReference>
<dbReference type="InterPro" id="IPR037172">
    <property type="entry name" value="Flavi_capsidC_sf"/>
</dbReference>
<dbReference type="InterPro" id="IPR011492">
    <property type="entry name" value="Flavi_DEAD"/>
</dbReference>
<dbReference type="InterPro" id="IPR027287">
    <property type="entry name" value="Flavi_E_Ig-like"/>
</dbReference>
<dbReference type="InterPro" id="IPR026470">
    <property type="entry name" value="Flavi_E_Stem/Anchor_dom"/>
</dbReference>
<dbReference type="InterPro" id="IPR038345">
    <property type="entry name" value="Flavi_E_Stem/Anchor_dom_sf"/>
</dbReference>
<dbReference type="InterPro" id="IPR011998">
    <property type="entry name" value="Flavi_Glycoprot_E_cen/dimer"/>
</dbReference>
<dbReference type="InterPro" id="IPR001157">
    <property type="entry name" value="Flavi_NS1"/>
</dbReference>
<dbReference type="InterPro" id="IPR000752">
    <property type="entry name" value="Flavi_NS2A"/>
</dbReference>
<dbReference type="InterPro" id="IPR000487">
    <property type="entry name" value="Flavi_NS2B"/>
</dbReference>
<dbReference type="InterPro" id="IPR001850">
    <property type="entry name" value="Flavi_NS3_S7"/>
</dbReference>
<dbReference type="InterPro" id="IPR000404">
    <property type="entry name" value="Flavi_NS4A"/>
</dbReference>
<dbReference type="InterPro" id="IPR001528">
    <property type="entry name" value="Flavi_NS4B"/>
</dbReference>
<dbReference type="InterPro" id="IPR046811">
    <property type="entry name" value="Flavi_NS5_thumb"/>
</dbReference>
<dbReference type="InterPro" id="IPR002535">
    <property type="entry name" value="Flavi_propep"/>
</dbReference>
<dbReference type="InterPro" id="IPR038688">
    <property type="entry name" value="Flavi_propep_sf"/>
</dbReference>
<dbReference type="InterPro" id="IPR047530">
    <property type="entry name" value="Flavi_RdRp"/>
</dbReference>
<dbReference type="InterPro" id="IPR000208">
    <property type="entry name" value="Flavi_RdRp_fingers/palm"/>
</dbReference>
<dbReference type="InterPro" id="IPR000336">
    <property type="entry name" value="Flavivir/Alphavir_Ig-like_sf"/>
</dbReference>
<dbReference type="InterPro" id="IPR014412">
    <property type="entry name" value="Gen_Poly_FLV"/>
</dbReference>
<dbReference type="InterPro" id="IPR036253">
    <property type="entry name" value="Glycoprot_cen/dimer_sf"/>
</dbReference>
<dbReference type="InterPro" id="IPR038055">
    <property type="entry name" value="Glycoprot_E_dimer_dom"/>
</dbReference>
<dbReference type="InterPro" id="IPR013756">
    <property type="entry name" value="GlyE_cen_dom_subdom2"/>
</dbReference>
<dbReference type="InterPro" id="IPR014001">
    <property type="entry name" value="Helicase_ATP-bd"/>
</dbReference>
<dbReference type="InterPro" id="IPR001650">
    <property type="entry name" value="Helicase_C-like"/>
</dbReference>
<dbReference type="InterPro" id="IPR014756">
    <property type="entry name" value="Ig_E-set"/>
</dbReference>
<dbReference type="InterPro" id="IPR026490">
    <property type="entry name" value="mRNA_cap_0/1_MeTrfase"/>
</dbReference>
<dbReference type="InterPro" id="IPR049486">
    <property type="entry name" value="NS3-hel_C_flaviviridae"/>
</dbReference>
<dbReference type="InterPro" id="IPR027417">
    <property type="entry name" value="P-loop_NTPase"/>
</dbReference>
<dbReference type="InterPro" id="IPR009003">
    <property type="entry name" value="Peptidase_S1_PA"/>
</dbReference>
<dbReference type="InterPro" id="IPR043504">
    <property type="entry name" value="Peptidase_S1_PA_chymotrypsin"/>
</dbReference>
<dbReference type="InterPro" id="IPR007094">
    <property type="entry name" value="RNA-dir_pol_PSvirus"/>
</dbReference>
<dbReference type="InterPro" id="IPR002877">
    <property type="entry name" value="RNA_MeTrfase_FtsJ_dom"/>
</dbReference>
<dbReference type="InterPro" id="IPR029063">
    <property type="entry name" value="SAM-dependent_MTases_sf"/>
</dbReference>
<dbReference type="NCBIfam" id="TIGR04240">
    <property type="entry name" value="flavi_E_stem"/>
    <property type="match status" value="1"/>
</dbReference>
<dbReference type="Pfam" id="PF20907">
    <property type="entry name" value="Flav_NS3-hel_C"/>
    <property type="match status" value="1"/>
</dbReference>
<dbReference type="Pfam" id="PF01003">
    <property type="entry name" value="Flavi_capsid"/>
    <property type="match status" value="1"/>
</dbReference>
<dbReference type="Pfam" id="PF07652">
    <property type="entry name" value="Flavi_DEAD"/>
    <property type="match status" value="1"/>
</dbReference>
<dbReference type="Pfam" id="PF21659">
    <property type="entry name" value="Flavi_E_stem"/>
    <property type="match status" value="1"/>
</dbReference>
<dbReference type="Pfam" id="PF02832">
    <property type="entry name" value="Flavi_glycop_C"/>
    <property type="match status" value="1"/>
</dbReference>
<dbReference type="Pfam" id="PF00869">
    <property type="entry name" value="Flavi_glycoprot"/>
    <property type="match status" value="1"/>
</dbReference>
<dbReference type="Pfam" id="PF01004">
    <property type="entry name" value="Flavi_M"/>
    <property type="match status" value="1"/>
</dbReference>
<dbReference type="Pfam" id="PF00948">
    <property type="entry name" value="Flavi_NS1"/>
    <property type="match status" value="1"/>
</dbReference>
<dbReference type="Pfam" id="PF01005">
    <property type="entry name" value="Flavi_NS2A"/>
    <property type="match status" value="1"/>
</dbReference>
<dbReference type="Pfam" id="PF01002">
    <property type="entry name" value="Flavi_NS2B"/>
    <property type="match status" value="1"/>
</dbReference>
<dbReference type="Pfam" id="PF01350">
    <property type="entry name" value="Flavi_NS4A"/>
    <property type="match status" value="1"/>
</dbReference>
<dbReference type="Pfam" id="PF01349">
    <property type="entry name" value="Flavi_NS4B"/>
    <property type="match status" value="1"/>
</dbReference>
<dbReference type="Pfam" id="PF00972">
    <property type="entry name" value="Flavi_NS5"/>
    <property type="match status" value="1"/>
</dbReference>
<dbReference type="Pfam" id="PF20483">
    <property type="entry name" value="Flavi_NS5_thumb"/>
    <property type="match status" value="1"/>
</dbReference>
<dbReference type="Pfam" id="PF01570">
    <property type="entry name" value="Flavi_propep"/>
    <property type="match status" value="1"/>
</dbReference>
<dbReference type="Pfam" id="PF01728">
    <property type="entry name" value="FtsJ"/>
    <property type="match status" value="1"/>
</dbReference>
<dbReference type="Pfam" id="PF00949">
    <property type="entry name" value="Peptidase_S7"/>
    <property type="match status" value="1"/>
</dbReference>
<dbReference type="PIRSF" id="PIRSF003817">
    <property type="entry name" value="Gen_Poly_FLV"/>
    <property type="match status" value="1"/>
</dbReference>
<dbReference type="SMART" id="SM00487">
    <property type="entry name" value="DEXDc"/>
    <property type="match status" value="1"/>
</dbReference>
<dbReference type="SMART" id="SM00490">
    <property type="entry name" value="HELICc"/>
    <property type="match status" value="1"/>
</dbReference>
<dbReference type="SUPFAM" id="SSF56672">
    <property type="entry name" value="DNA/RNA polymerases"/>
    <property type="match status" value="1"/>
</dbReference>
<dbReference type="SUPFAM" id="SSF81296">
    <property type="entry name" value="E set domains"/>
    <property type="match status" value="1"/>
</dbReference>
<dbReference type="SUPFAM" id="SSF101257">
    <property type="entry name" value="Flavivirus capsid protein C"/>
    <property type="match status" value="1"/>
</dbReference>
<dbReference type="SUPFAM" id="SSF52540">
    <property type="entry name" value="P-loop containing nucleoside triphosphate hydrolases"/>
    <property type="match status" value="2"/>
</dbReference>
<dbReference type="SUPFAM" id="SSF53335">
    <property type="entry name" value="S-adenosyl-L-methionine-dependent methyltransferases"/>
    <property type="match status" value="1"/>
</dbReference>
<dbReference type="SUPFAM" id="SSF50494">
    <property type="entry name" value="Trypsin-like serine proteases"/>
    <property type="match status" value="1"/>
</dbReference>
<dbReference type="SUPFAM" id="SSF56983">
    <property type="entry name" value="Viral glycoprotein, central and dimerisation domains"/>
    <property type="match status" value="1"/>
</dbReference>
<dbReference type="PROSITE" id="PS51527">
    <property type="entry name" value="FLAVIVIRUS_NS2B"/>
    <property type="match status" value="1"/>
</dbReference>
<dbReference type="PROSITE" id="PS51528">
    <property type="entry name" value="FLAVIVIRUS_NS3PRO"/>
    <property type="match status" value="1"/>
</dbReference>
<dbReference type="PROSITE" id="PS51192">
    <property type="entry name" value="HELICASE_ATP_BIND_1"/>
    <property type="match status" value="1"/>
</dbReference>
<dbReference type="PROSITE" id="PS51194">
    <property type="entry name" value="HELICASE_CTER"/>
    <property type="match status" value="1"/>
</dbReference>
<dbReference type="PROSITE" id="PS50507">
    <property type="entry name" value="RDRP_SSRNA_POS"/>
    <property type="match status" value="1"/>
</dbReference>
<dbReference type="PROSITE" id="PS51591">
    <property type="entry name" value="RNA_CAP01_NS5_MT"/>
    <property type="match status" value="1"/>
</dbReference>
<proteinExistence type="inferred from homology"/>
<accession>Q5UCB8</accession>
<organism>
    <name type="scientific">Dengue virus type 4 (strain Singapore/8976/1995)</name>
    <name type="common">DENV-4</name>
    <dbReference type="NCBI Taxonomy" id="408687"/>
    <lineage>
        <taxon>Viruses</taxon>
        <taxon>Riboviria</taxon>
        <taxon>Orthornavirae</taxon>
        <taxon>Kitrinoviricota</taxon>
        <taxon>Flasuviricetes</taxon>
        <taxon>Amarillovirales</taxon>
        <taxon>Flaviviridae</taxon>
        <taxon>Orthoflavivirus</taxon>
        <taxon>Orthoflavivirus denguei</taxon>
        <taxon>Dengue virus</taxon>
    </lineage>
</organism>
<organismHost>
    <name type="scientific">Aedes aegypti</name>
    <name type="common">Yellowfever mosquito</name>
    <name type="synonym">Culex aegypti</name>
    <dbReference type="NCBI Taxonomy" id="7159"/>
</organismHost>
<organismHost>
    <name type="scientific">Aedes albopictus</name>
    <name type="common">Asian tiger mosquito</name>
    <name type="synonym">Stegomyia albopicta</name>
    <dbReference type="NCBI Taxonomy" id="7160"/>
</organismHost>
<organismHost>
    <name type="scientific">Aedes polynesiensis</name>
    <name type="common">Polynesian tiger mosquito</name>
    <dbReference type="NCBI Taxonomy" id="188700"/>
</organismHost>
<organismHost>
    <name type="scientific">Homo sapiens</name>
    <name type="common">Human</name>
    <dbReference type="NCBI Taxonomy" id="9606"/>
</organismHost>
<comment type="function">
    <molecule>Capsid protein C</molecule>
    <text evidence="6">Plays a role in virus budding by binding to the cell membrane and gathering the viral RNA into a nucleocapsid that forms the core of a mature virus particle. During virus entry, may induce genome penetration into the host cytoplasm after hemifusion induced by the surface proteins. Can migrate to the cell nucleus where it modulates host functions. Overcomes the anti-viral effects of host EXOC1 by sequestering and degrading the latter through the proteasome degradation pathway.</text>
</comment>
<comment type="function">
    <molecule>Capsid protein C</molecule>
    <text evidence="1">Inhibits RNA silencing by interfering with host Dicer.</text>
</comment>
<comment type="function">
    <molecule>Peptide pr</molecule>
    <text evidence="6">Prevents premature fusion activity of envelope proteins in trans-Golgi by binding to envelope protein E at pH6.0. After virion release in extracellular space, gets dissociated from E dimers.</text>
</comment>
<comment type="function">
    <molecule>Protein prM</molecule>
    <text evidence="6">Acts as a chaperone for envelope protein E during intracellular virion assembly by masking and inactivating envelope protein E fusion peptide. prM is the only viral peptide matured by host furin in the trans-Golgi network probably to avoid catastrophic activation of the viral fusion activity in acidic Golgi compartment prior to virion release. prM-E cleavage is inefficient, and many virions are only partially matured. These uncleaved prM would play a role in immune evasion.</text>
</comment>
<comment type="function">
    <molecule>Small envelope protein M</molecule>
    <text evidence="6">May play a role in virus budding. Exerts cytotoxic effects by activating a mitochondrial apoptotic pathway through M ectodomain. May display a viroporin activity.</text>
</comment>
<comment type="function">
    <molecule>Envelope protein E</molecule>
    <text evidence="6">Binds to host cell surface receptor and mediates fusion between viral and cellular membranes. Envelope protein is synthesized in the endoplasmic reticulum in the form of heterodimer with protein prM. They play a role in virion budding in the ER, and the newly formed immature particle is covered with 60 spikes composed of heterodimer between precursor prM and envelope protein E. The virion is transported to the Golgi apparatus where the low pH causes dissociation of PrM-E heterodimers and formation of E homodimers. prM-E cleavage is inefficient, and many virions are only partially matured. These uncleaved prM would play a role in immune evasion.</text>
</comment>
<comment type="function">
    <molecule>Non-structural protein 1</molecule>
    <text evidence="11">Involved in immune evasion, pathogenesis and viral replication. Once cleaved off the polyprotein, is targeted to three destinations: the viral replication cycle, the plasma membrane and the extracellular compartment. Essential for viral replication. Required for formation of the replication complex and recruitment of other non-structural proteins to the ER-derived membrane structures. Excreted as a hexameric lipoparticle that plays a role against host immune response. Antagonizing the complement function. Binds to the host macrophages and dendritic cells. Inhibits signal transduction originating from Toll-like receptor 3 (TLR3).</text>
</comment>
<comment type="function">
    <molecule>Non-structural protein 1</molecule>
    <text evidence="6">Disrupts the host endothelial glycocalyx layer of host pulmonary microvascular endothelial cells, inducing degradation of sialic acid and shedding of heparan sulfate proteoglycans. NS1 induces expression of sialidases, heparanase, and activates cathepsin L, which activates heparanase via enzymatic cleavage. These effects are probably linked to the endothelial hyperpermeability observed in severe dengue disease.</text>
</comment>
<comment type="function">
    <molecule>Non-structural protein 2A</molecule>
    <text evidence="6">Component of the viral RNA replication complex that functions in virion assembly and antagonizes the host immune response.</text>
</comment>
<comment type="function">
    <molecule>Serine protease subunit NS2B</molecule>
    <text evidence="6 16">Required cofactor for the serine protease function of NS3. May have membrane-destabilizing activity and form viroporins (By similarity).</text>
</comment>
<comment type="function">
    <molecule>Serine protease NS3</molecule>
    <text evidence="17">Displays three enzymatic activities: serine protease, NTPase and RNA helicase. NS3 serine protease, in association with NS2B, performs its autocleavage and cleaves the polyprotein at dibasic sites in the cytoplasm: C-prM, NS2A-NS2B, NS2B-NS3, NS3-NS4A, NS4A-2K and NS4B-NS5. NS3 RNA helicase binds RNA and unwinds dsRNA in the 3' to 5' direction.</text>
</comment>
<comment type="function">
    <molecule>Non-structural protein 4A</molecule>
    <text evidence="6 8 11">Regulates the ATPase activity of the NS3 helicase activity. NS4A allows NS3 helicase to conserve energy during unwinding. Plays a role in the inhibition of the host innate immune response. Interacts with host MAVS and thereby prevents the interaction between RIGI and MAVS. In turn, IFN-beta production is impaired. Interacts with host AUP1 which mediates induction of lipophagy in host cells and facilitates production of virus progeny particles (By similarity).</text>
</comment>
<comment type="function">
    <molecule>Peptide 2k</molecule>
    <text evidence="6">Functions as a signal peptide for NS4B and is required for the interferon antagonism activity of the latter.</text>
</comment>
<comment type="function">
    <molecule>Non-structural protein 4B</molecule>
    <text evidence="11">Induces the formation of ER-derived membrane vesicles where the viral replication takes place. Inhibits interferon (IFN)-induced host STAT1 phosphorylation and nuclear translocation, thereby preventing the establishment of cellular antiviral state by blocking the IFN-alpha/beta pathway.</text>
</comment>
<comment type="function">
    <molecule>RNA-directed RNA polymerase NS5</molecule>
    <text evidence="2 6">Replicates the viral (+) and (-) RNA genome, and performs the capping of genomes in the cytoplasm. NS5 methylates viral RNA cap at guanine N-7 and ribose 2'-O positions. Besides its role in RNA genome replication, also prevents the establishment of cellular antiviral state by blocking the interferon-alpha/beta (IFN-alpha/beta) signaling pathway. Inhibits host TYK2 and STAT2 phosphorylation, thereby preventing activation of JAK-STAT signaling pathway (By similarity). May reduce immune responses by preventing the recruitment of the host PAF1 complex to interferon-responsive genes (By similarity).</text>
</comment>
<comment type="catalytic activity">
    <reaction>
        <text>Selective hydrolysis of -Xaa-Xaa-|-Yaa- bonds in which each of the Xaa can be either Arg or Lys and Yaa can be either Ser or Ala.</text>
        <dbReference type="EC" id="3.4.21.91"/>
    </reaction>
</comment>
<comment type="catalytic activity">
    <reaction evidence="14">
        <text>RNA(n) + a ribonucleoside 5'-triphosphate = RNA(n+1) + diphosphate</text>
        <dbReference type="Rhea" id="RHEA:21248"/>
        <dbReference type="Rhea" id="RHEA-COMP:14527"/>
        <dbReference type="Rhea" id="RHEA-COMP:17342"/>
        <dbReference type="ChEBI" id="CHEBI:33019"/>
        <dbReference type="ChEBI" id="CHEBI:61557"/>
        <dbReference type="ChEBI" id="CHEBI:140395"/>
        <dbReference type="EC" id="2.7.7.48"/>
    </reaction>
</comment>
<comment type="catalytic activity">
    <reaction>
        <text>a ribonucleoside 5'-triphosphate + H2O = a ribonucleoside 5'-diphosphate + phosphate + H(+)</text>
        <dbReference type="Rhea" id="RHEA:23680"/>
        <dbReference type="ChEBI" id="CHEBI:15377"/>
        <dbReference type="ChEBI" id="CHEBI:15378"/>
        <dbReference type="ChEBI" id="CHEBI:43474"/>
        <dbReference type="ChEBI" id="CHEBI:57930"/>
        <dbReference type="ChEBI" id="CHEBI:61557"/>
        <dbReference type="EC" id="3.6.1.15"/>
    </reaction>
</comment>
<comment type="catalytic activity">
    <reaction>
        <text>ATP + H2O = ADP + phosphate + H(+)</text>
        <dbReference type="Rhea" id="RHEA:13065"/>
        <dbReference type="ChEBI" id="CHEBI:15377"/>
        <dbReference type="ChEBI" id="CHEBI:15378"/>
        <dbReference type="ChEBI" id="CHEBI:30616"/>
        <dbReference type="ChEBI" id="CHEBI:43474"/>
        <dbReference type="ChEBI" id="CHEBI:456216"/>
        <dbReference type="EC" id="3.6.4.13"/>
    </reaction>
</comment>
<comment type="catalytic activity">
    <reaction evidence="18">
        <text>a 5'-end (5'-triphosphoguanosine)-ribonucleoside in mRNA + S-adenosyl-L-methionine = a 5'-end (N(7)-methyl 5'-triphosphoguanosine)-ribonucleoside in mRNA + S-adenosyl-L-homocysteine</text>
        <dbReference type="Rhea" id="RHEA:67008"/>
        <dbReference type="Rhea" id="RHEA-COMP:17166"/>
        <dbReference type="Rhea" id="RHEA-COMP:17167"/>
        <dbReference type="ChEBI" id="CHEBI:57856"/>
        <dbReference type="ChEBI" id="CHEBI:59789"/>
        <dbReference type="ChEBI" id="CHEBI:156461"/>
        <dbReference type="ChEBI" id="CHEBI:167617"/>
        <dbReference type="EC" id="2.1.1.56"/>
    </reaction>
</comment>
<comment type="catalytic activity">
    <reaction evidence="18">
        <text>a 5'-end (N(7)-methyl 5'-triphosphoguanosine)-ribonucleoside in mRNA + S-adenosyl-L-methionine = a 5'-end (N(7)-methyl 5'-triphosphoguanosine)-(2'-O-methyl-ribonucleoside) in mRNA + S-adenosyl-L-homocysteine + H(+)</text>
        <dbReference type="Rhea" id="RHEA:67020"/>
        <dbReference type="Rhea" id="RHEA-COMP:17167"/>
        <dbReference type="Rhea" id="RHEA-COMP:17168"/>
        <dbReference type="ChEBI" id="CHEBI:15378"/>
        <dbReference type="ChEBI" id="CHEBI:57856"/>
        <dbReference type="ChEBI" id="CHEBI:59789"/>
        <dbReference type="ChEBI" id="CHEBI:156461"/>
        <dbReference type="ChEBI" id="CHEBI:167609"/>
        <dbReference type="EC" id="2.1.1.57"/>
    </reaction>
</comment>
<comment type="subunit">
    <molecule>Capsid protein C</molecule>
    <text evidence="6">Homodimer. Interacts (via N-terminus) with host EXOC1 (via C-terminus); this interaction results in EXOC1 degradation through the proteasome degradation pathway.</text>
</comment>
<comment type="subunit">
    <molecule>Protein prM</molecule>
    <text evidence="6">Forms heterodimers with envelope protein E in the endoplasmic reticulum and Golgi.</text>
</comment>
<comment type="subunit">
    <molecule>Envelope protein E</molecule>
    <text evidence="6">Homodimer; in the endoplasmic reticulum and Golgi. Interacts with protein prM. Interacts with non-structural protein 1.</text>
</comment>
<comment type="subunit">
    <molecule>Non-structural protein 1</molecule>
    <text evidence="6">Homodimer; Homohexamer when secreted. Interacts with envelope protein E.</text>
</comment>
<comment type="subunit">
    <molecule>Non-structural protein 2A</molecule>
    <text evidence="6">Interacts (via N-terminus) with serine protease NS3.</text>
</comment>
<comment type="subunit">
    <molecule>Serine protease subunit NS2B</molecule>
    <text evidence="6">Forms a heterodimer with serine protease NS3. May form homooligomers.</text>
</comment>
<comment type="subunit">
    <molecule>Serine protease NS3</molecule>
    <text evidence="6">Forms a heterodimer with NS2B. Interacts with NS4B. Interacts with unphosphorylated RNA-directed RNA polymerase NS5; this interaction stimulates RNA-directed RNA polymerase NS5 guanylyltransferase activity. Interacts with host SHFL.</text>
</comment>
<comment type="subunit">
    <molecule>Non-structural protein 4A</molecule>
    <text evidence="6 8">Interacts with host MAVS; this interaction inhibits the synthesis of IFN-beta. Interacts with host SHFL. Interacts with host AUP1; the interaction occurs in the presence of Dengue virus NS4B and induces lipophagy which facilitates production of virus progeny particles (By similarity).</text>
</comment>
<comment type="subunit">
    <molecule>Non-structural protein 4B</molecule>
    <text evidence="6">Interacts with serine protease NS3.</text>
</comment>
<comment type="subunit">
    <molecule>RNA-directed RNA polymerase NS5</molecule>
    <text evidence="2 6">Homodimer. Interacts with host STAT2; this interaction inhibits the phosphorylation of the latter, and, when all viral proteins are present (polyprotein), targets STAT2 for degradation. Interacts with serine protease NS3 (By similarity). Interacts with host PAF1 complex; the interaction may prevent the recruitment of the PAF1 complex to interferon-responsive genes, and thus reduces the immune response (By similarity).</text>
</comment>
<comment type="subcellular location">
    <molecule>Capsid protein C</molecule>
    <subcellularLocation>
        <location evidence="6">Virion</location>
    </subcellularLocation>
    <subcellularLocation>
        <location evidence="6">Host nucleus</location>
    </subcellularLocation>
    <subcellularLocation>
        <location evidence="6">Host cytoplasm</location>
    </subcellularLocation>
    <subcellularLocation>
        <location evidence="6">Host cytoplasm</location>
        <location evidence="6">Host perinuclear region</location>
    </subcellularLocation>
</comment>
<comment type="subcellular location">
    <molecule>Peptide pr</molecule>
    <subcellularLocation>
        <location evidence="6">Secreted</location>
    </subcellularLocation>
</comment>
<comment type="subcellular location">
    <molecule>Small envelope protein M</molecule>
    <subcellularLocation>
        <location evidence="6">Virion membrane</location>
        <topology evidence="12">Multi-pass membrane protein</topology>
    </subcellularLocation>
    <subcellularLocation>
        <location evidence="6">Host endoplasmic reticulum membrane</location>
        <topology evidence="12">Multi-pass membrane protein</topology>
    </subcellularLocation>
</comment>
<comment type="subcellular location">
    <molecule>Envelope protein E</molecule>
    <subcellularLocation>
        <location evidence="6">Virion membrane</location>
        <topology evidence="12">Multi-pass membrane protein</topology>
    </subcellularLocation>
    <subcellularLocation>
        <location evidence="6">Host endoplasmic reticulum membrane</location>
        <topology evidence="12">Multi-pass membrane protein</topology>
    </subcellularLocation>
</comment>
<comment type="subcellular location">
    <molecule>Non-structural protein 1</molecule>
    <subcellularLocation>
        <location evidence="6">Secreted</location>
    </subcellularLocation>
    <subcellularLocation>
        <location>Host endoplasmic reticulum membrane</location>
        <topology>Peripheral membrane protein</topology>
        <orientation evidence="6">Lumenal side</orientation>
    </subcellularLocation>
    <text evidence="11">Located in RE-derived vesicles hosting the replication complex.</text>
</comment>
<comment type="subcellular location">
    <molecule>Non-structural protein 2A</molecule>
    <subcellularLocation>
        <location evidence="6">Host endoplasmic reticulum membrane</location>
        <topology evidence="6">Multi-pass membrane protein</topology>
    </subcellularLocation>
</comment>
<comment type="subcellular location">
    <molecule>Serine protease subunit NS2B</molecule>
    <subcellularLocation>
        <location>Host endoplasmic reticulum membrane</location>
        <topology evidence="6">Multi-pass membrane protein</topology>
    </subcellularLocation>
</comment>
<comment type="subcellular location">
    <molecule>Serine protease NS3</molecule>
    <subcellularLocation>
        <location evidence="17">Host endoplasmic reticulum membrane</location>
        <topology evidence="17">Peripheral membrane protein</topology>
        <orientation evidence="17">Cytoplasmic side</orientation>
    </subcellularLocation>
    <text evidence="17">Remains non-covalently associated to serine protease subunit NS2B.</text>
</comment>
<comment type="subcellular location">
    <molecule>Non-structural protein 4A</molecule>
    <subcellularLocation>
        <location evidence="6">Host endoplasmic reticulum membrane</location>
        <topology evidence="6">Multi-pass membrane protein</topology>
    </subcellularLocation>
    <subcellularLocation>
        <location evidence="6">Host mitochondrion</location>
    </subcellularLocation>
    <text evidence="6">Located in RE-associated vesicles hosting the replication complex. Interacts with host MAVS in the mitochondrion-associated endoplasmic reticulum membranes.</text>
</comment>
<comment type="subcellular location">
    <molecule>Non-structural protein 4B</molecule>
    <subcellularLocation>
        <location evidence="6">Host endoplasmic reticulum membrane</location>
        <topology evidence="6">Multi-pass membrane protein</topology>
    </subcellularLocation>
    <text evidence="11">Located in RE-derived vesicles hosting the replication complex.</text>
</comment>
<comment type="subcellular location">
    <molecule>RNA-directed RNA polymerase NS5</molecule>
    <subcellularLocation>
        <location>Host endoplasmic reticulum membrane</location>
        <topology>Peripheral membrane protein</topology>
        <orientation>Cytoplasmic side</orientation>
    </subcellularLocation>
    <subcellularLocation>
        <location evidence="2 6">Host nucleus</location>
    </subcellularLocation>
    <text evidence="6">Located in RE-associated vesicles hosting the replication complex. NS5 protein is mainly localized in the nucleus rather than in ER vesicles, especially in the DENV 2, 3, 4 serotypes.</text>
</comment>
<comment type="domain">
    <text evidence="6">The transmembrane domains of the small envelope protein M and envelope protein E contain an endoplasmic reticulum retention signal.</text>
</comment>
<comment type="PTM">
    <molecule>Genome polyprotein</molecule>
    <text evidence="6">Specific enzymatic cleavages in vivo yield mature proteins. Cleavages in the lumen of endoplasmic reticulum are performed by host signal peptidase, whereas cleavages in the cytoplasmic side are performed by serine protease NS3. Signal cleavage at the 2K-4B site requires a prior NS3 protease-mediated cleavage at the 4A-2K site.</text>
</comment>
<comment type="PTM">
    <molecule>Protein prM</molecule>
    <text evidence="6">Cleaved in post-Golgi vesicles by a host furin, releasing the mature small envelope protein M, and peptide pr. This cleavage is incomplete as up to 30% of viral particles still carry uncleaved prM.</text>
</comment>
<comment type="PTM">
    <molecule>Envelope protein E</molecule>
    <text evidence="6">N-glycosylated.</text>
</comment>
<comment type="PTM">
    <molecule>Non-structural protein 1</molecule>
    <text evidence="6">N-glycosylated. The excreted form is glycosylated and this is required for efficient secretion of the protein from infected cells.</text>
</comment>
<comment type="PTM">
    <molecule>Serine protease NS3</molecule>
    <text evidence="9">Acetylated by host KAT5. Acetylation modulates NS3 RNA-binding and unwinding activities and plays an important positive role for viral replication.</text>
</comment>
<comment type="PTM">
    <molecule>RNA-directed RNA polymerase NS5</molecule>
    <text evidence="7">Sumoylation of RNA-directed RNA polymerase NS5 increases NS5 protein stability allowing proper viral RNA replication.</text>
</comment>
<comment type="PTM">
    <molecule>RNA-directed RNA polymerase NS5</molecule>
    <text evidence="6">Phosphorylated on serines residues. This phosphorylation may trigger NS5 nuclear localization.</text>
</comment>
<comment type="similarity">
    <text evidence="18">In the N-terminal section; belongs to the class I-like SAM-binding methyltransferase superfamily. mRNA cap 0-1 NS5-type methyltransferase family.</text>
</comment>
<sequence length="3387" mass="378484">MNQRKKVVRPPFNMLKRERNRVSTPQGLVKRFSTGLFSGKGPLRMVLAFITFLRVLSIPPTAGILKRWGQLKKNKAIKILIGFRKEIGRMLNILNGRKRSTMTLLCLIPTVMAFHLSTRDGEPLMIVAKHERGRPLLFKTTEGINKCTLIAMDLGEMCEDTVTYKCPLLVNTEPEDIDCWCNLTSTWVMYGTCTQSGERRREKRSVALTPHSGMGLETRAETWMSSEGAWKHAQRVESWILRNPGFALLAGFMAYMIGQTGIQRTVFFVLMMLVAPSYGMRCVGVGNRDFVEGVSGGAWVDLVLEHGGCVTTMAQGKPTLDFELTKTTAKEVALLRTYCIEASISNITTATRCPTQGEPYLKEEQDQQYICRRDVVDRGWGNGCGLFGKGGVVTCAKFSCSGKITGNLVQIENLEYTVVVTVHNGDTHAVGNDTSNHGVTATITPRSPSVEVKLPDYGELTLDCEPRSGIDFNEMILMEMKKKTWLVHKQWFLDLPLPWTAGADTSEVHWNYKERMVTFKVPHAKRQDVTVLGSQEGAMHSALAGATEVDSGDGNHMFAGHLKCKVRMEKLRIKGMSYTMCSGKFSIDKEMAETQHGTTVVKVKYEGAGAPCKVPIEIRDVNKEKVVGRVISSTPLAENTNSVTNIELEPPFGDSYIVIGVGNSALTLHWFRKGSSIGKMFESTYRGAKRMAILGETAWDFGSVGGLFTSLGKAVHQVFGSVYTTMFGGVSWMVRILIGFLVLWIGTNSRNTSMAMTCIAVGGITLFLGFTVQADMGCVVSWSGKELKCGSGIFVADNVHTWTEQYKFQPESPARLASAILNAHKDGVCGIRSTTRLENVMWKQITNELNYVLWEGGHDLTVVAGDVKGVLTKGKRALTPPVNDLKYSWKTWGKAKIFTPEARNSTFLIDGPDTSECPNERRAWNFLEVEDYGFGMFTTNIWMKFREGSSEVCDHRLMSAAIKDQKAVHADMGYWIESSKNQTWQIEKASLIEVKTCLWPKTHTLWSNGVLESQMLIPKSYAGPFSQHNYRQGYATQTVGPWHLGKLEIDFGECPGTTVTIQEDCDHRGPSLRTTTASGKLVTQWCCRSCTMPPLRFLGEDGCWYGMEIRPLSEKEENMVKSQVTAGQGTSETFSMGLLCLTLFMEECLRRRVTRKHMILVVVITLCAIILGGLTWMDLLRALIMLGDTMSGRIGGQVHLAIMAVFKMSPGYVLGVFLRKLTSRETALMVIGMAMTTVLSIPHDLMELIDGISLGLILLKIVTQFDNTQVGTLALSLTFIRSTMPLVMAWRTIMAVLFVVTLIPLCRTSCLQKQSHWVEITALILGAQALPVYLMTLMKGASRRSWPLNEGIMAVGLVSLLGSALLKNDVPLAGPMVAGGLLLAAYVMSGSSADLSLEKAANVQWDEMADITGSSPIIEVKQDEDGSFSIRDVEETNMITLLVKLALITVSGLYPLAIPVTMTLWYMWQVKTQRSGALWDVPSPAATQKAALSEGVYRIMQRGLFGKTQVGVGIHIEGVFHTMWHVTRGSVICHETGRLEPSWADVRNDMISYGGGWRLGDKWDKEEDVQVLAIEPGKNPKHVQTKPGLFKTLTGEIGAVTLDFKPGTSGSPIINRKGKVIGLYGNGVVTKSGDYVSAITQAERIGEPDYEVDEDIFRKKRLTIMDLHPGAGKTKRILPSIVREALKRRLRTLILAPTRVVAAEMEEALRGLPIRYQTPAVKSEHTGREIVDLMCHATFTTRLLSSTRVPNYNLIVMDEAHFTDPSSVAARGYISTRVEMGEAAAIFMTATPPGTTDPFPQSNSPIEDIEREIPERSWNTGFDWITDYQGKTVWFVPSIKAGNDIANCLRKSGKKVIQLSRKTFDTEYPKTKLTDWDFVVTTDISEMGANFRAGRVIDPRRCLKPVILPDGPERVILAGPIPVTPASAAQRRGRIGRNPAQEDDQYVFSGDPLKNDEDHAHWTEAKMLLDNIYTPEGIIPTLFGPEREKTQAIDGEFRLRGEQRKTFVELMRRGDLPVWLSYKVASAGISYKDREWCFTGERNNQILEENMEVEIWTREGEKKKLRPKWLDARVYADPMALKDFKEFASGRKSITLDILTEIASLPTYLSSRAKLALDNIVMLHTTEKGGRAYQHALNELPESLETLMLVALLGAMTAGTFLFFMQGKGIGKLSMGLITIAVASGLLWVAELQPQWIAASIILEFFLMVLLIPEPEKQRTPQDNQLIYVILTILTIIGLIAANEMGLIEKTKTDFGFYQVKTETTILDVDLRPASAWTLYAVATTILTPMLRHTIENTSANLSLAAIANQAAVLMGLGKGWPLHRVDLGVPLLAMGCYSQVNPTTLTASLVMLLVHYAIIGPGLQAKATREAQKRTAAGIMKNPTVDGITVIDLEPISYDPKFEKQLGQVMLLVLCAGQLLLMRTTWAFCEVLTLATGPILTLWEGNPGRFWNTTIAVSTANIFRGSYLAGAGLAFSLIKNAQTPRRGTGTTGETLGEKWKRQLNSLDRKEFEEYKRSGIIEVDRTEAKSALKDGSKIKHAVSRGSSKIRWIVERGMVKPKGKVVDLGCGRGGWSYYMATLKNVTEVRGFTKGGPGHEEPIPMATYGWNLVKLHSGVDVFYKPTEQVDTLLCDIGESSSNPTIEEGRTLRVLKMVEPWLSSKPEFCIKVLNPYMPTVIEELEKLQRKHGGNLVRCPLSRNSTHEMYWVSGASGNIVSSVNTTSKMLLNRFTTRHRKPTYEKDVDLGAGTRSVSTETEKPDMTIIGRRLQRLQEEHKETWHYDQENPYRTWAYHGSYEAPSTGSASSMVNGVVKLLTKPWDVIPMVTQLAMTDTTPFGQQRVFKEKVDTRTPQPKPGTRMVMTTTANWLWTLLGKKKNPRLCTREEFISKVRSNAAIGAVFQEEQGWTSASEAVNDSRFWELVDKERALHQEGRCESCVYNMMGKREKKLGEFGRAKGSRAIWYMWLGARFLEFEALGFLNEDHWFGRENSWSGVEGEGLHRLGYILEDIDKKDGDLMYADDTAGWDTRITEDDLQNEELITEQMAPHHKILAKAIFKLTYQNKVVKVLRPTPRGAVMDIISRKDQRGSGQVGTYGLNTFTNMEVQLIRQMEAEGVITQDDMQNPKGLKERVEKWLKECGVDRLKRMAISGDDCVVKPLDERFSTSLLFLNDMGKVRKDIPQWEPSKGWKNWQEVPFCSHHFHKIFMKDGRSLVVPCRNQDELIGRARISQGAGWSLRETACLGKAYAQMWSLMYFHRRDLRLASMAICSAVPTEWFPTSRTTWSIHAHHQWMTTEDMLKVWNRVWIEDNPNMTDKTPVHSWEDVPYLGKREDLWCGSLIGLSSRATWAKNIHTAITQVRNLIGKEEYVDYMPVMKRYSAPSESEGVL</sequence>
<name>POLG_DEN4S</name>
<reference key="1">
    <citation type="submission" date="2004-09" db="EMBL/GenBank/DDBJ databases">
        <title>Dengue virus type 4 strain Singapore 8976/95, complete genome.</title>
        <authorList>
            <person name="Yoong L.F."/>
            <person name="Tan T."/>
            <person name="Anwar A."/>
            <person name="August T.J."/>
            <person name="Too H.P."/>
        </authorList>
    </citation>
    <scope>NUCLEOTIDE SEQUENCE [GENOMIC RNA]</scope>
</reference>
<keyword id="KW-0007">Acetylation</keyword>
<keyword id="KW-1072">Activation of host autophagy by virus</keyword>
<keyword id="KW-0067">ATP-binding</keyword>
<keyword id="KW-0167">Capsid protein</keyword>
<keyword id="KW-1165">Clathrin-mediated endocytosis of virus by host</keyword>
<keyword id="KW-0165">Cleavage on pair of basic residues</keyword>
<keyword id="KW-1015">Disulfide bond</keyword>
<keyword id="KW-1170">Fusion of virus membrane with host endosomal membrane</keyword>
<keyword id="KW-1168">Fusion of virus membrane with host membrane</keyword>
<keyword id="KW-0325">Glycoprotein</keyword>
<keyword id="KW-0347">Helicase</keyword>
<keyword id="KW-1035">Host cytoplasm</keyword>
<keyword id="KW-1038">Host endoplasmic reticulum</keyword>
<keyword id="KW-1043">Host membrane</keyword>
<keyword id="KW-1045">Host mitochondrion</keyword>
<keyword id="KW-1048">Host nucleus</keyword>
<keyword id="KW-0945">Host-virus interaction</keyword>
<keyword id="KW-0378">Hydrolase</keyword>
<keyword id="KW-1090">Inhibition of host innate immune response by virus</keyword>
<keyword id="KW-1114">Inhibition of host interferon signaling pathway by virus</keyword>
<keyword id="KW-1097">Inhibition of host MAVS by virus</keyword>
<keyword id="KW-1113">Inhibition of host RLR pathway by virus</keyword>
<keyword id="KW-1106">Inhibition of host STAT2 by virus</keyword>
<keyword id="KW-1112">Inhibition of host TYK2 by virus</keyword>
<keyword id="KW-0922">Interferon antiviral system evasion</keyword>
<keyword id="KW-0407">Ion channel</keyword>
<keyword id="KW-0406">Ion transport</keyword>
<keyword id="KW-0472">Membrane</keyword>
<keyword id="KW-0479">Metal-binding</keyword>
<keyword id="KW-0489">Methyltransferase</keyword>
<keyword id="KW-0506">mRNA capping</keyword>
<keyword id="KW-0507">mRNA processing</keyword>
<keyword id="KW-0511">Multifunctional enzyme</keyword>
<keyword id="KW-0547">Nucleotide-binding</keyword>
<keyword id="KW-0548">Nucleotidyltransferase</keyword>
<keyword id="KW-0597">Phosphoprotein</keyword>
<keyword id="KW-0645">Protease</keyword>
<keyword id="KW-0694">RNA-binding</keyword>
<keyword id="KW-0696">RNA-directed RNA polymerase</keyword>
<keyword id="KW-0949">S-adenosyl-L-methionine</keyword>
<keyword id="KW-0964">Secreted</keyword>
<keyword id="KW-0720">Serine protease</keyword>
<keyword id="KW-0941">Suppressor of RNA silencing</keyword>
<keyword id="KW-0804">Transcription</keyword>
<keyword id="KW-0805">Transcription regulation</keyword>
<keyword id="KW-0808">Transferase</keyword>
<keyword id="KW-0812">Transmembrane</keyword>
<keyword id="KW-1133">Transmembrane helix</keyword>
<keyword id="KW-0813">Transport</keyword>
<keyword id="KW-0832">Ubl conjugation</keyword>
<keyword id="KW-1161">Viral attachment to host cell</keyword>
<keyword id="KW-0261">Viral envelope protein</keyword>
<keyword id="KW-0899">Viral immunoevasion</keyword>
<keyword id="KW-1182">Viral ion channel</keyword>
<keyword id="KW-1162">Viral penetration into host cytoplasm</keyword>
<keyword id="KW-0693">Viral RNA replication</keyword>
<keyword id="KW-0946">Virion</keyword>
<keyword id="KW-1164">Virus endocytosis by host</keyword>
<keyword id="KW-1160">Virus entry into host cell</keyword>
<keyword id="KW-0862">Zinc</keyword>
<protein>
    <recommendedName>
        <fullName>Genome polyprotein</fullName>
    </recommendedName>
    <component>
        <recommendedName>
            <fullName>Capsid protein C</fullName>
        </recommendedName>
        <alternativeName>
            <fullName>Core protein</fullName>
        </alternativeName>
    </component>
    <component>
        <recommendedName>
            <fullName>Protein prM</fullName>
        </recommendedName>
    </component>
    <component>
        <recommendedName>
            <fullName>Peptide pr</fullName>
        </recommendedName>
    </component>
    <component>
        <recommendedName>
            <fullName>Small envelope protein M</fullName>
        </recommendedName>
        <alternativeName>
            <fullName>Matrix protein</fullName>
        </alternativeName>
    </component>
    <component>
        <recommendedName>
            <fullName>Envelope protein E</fullName>
        </recommendedName>
    </component>
    <component>
        <recommendedName>
            <fullName>Non-structural protein 1</fullName>
            <shortName>NS1</shortName>
        </recommendedName>
    </component>
    <component>
        <recommendedName>
            <fullName>Non-structural protein 2A</fullName>
            <shortName>NS2A</shortName>
        </recommendedName>
    </component>
    <component>
        <recommendedName>
            <fullName>Serine protease subunit NS2B</fullName>
        </recommendedName>
        <alternativeName>
            <fullName>Flavivirin protease NS2B regulatory subunit</fullName>
        </alternativeName>
        <alternativeName>
            <fullName>Non-structural protein 2B</fullName>
        </alternativeName>
    </component>
    <component>
        <recommendedName>
            <fullName>Serine protease NS3</fullName>
            <ecNumber>3.4.21.91</ecNumber>
            <ecNumber evidence="11">3.6.1.15</ecNumber>
            <ecNumber evidence="11">3.6.4.13</ecNumber>
        </recommendedName>
        <alternativeName>
            <fullName>Flavivirin protease NS3 catalytic subunit</fullName>
        </alternativeName>
        <alternativeName>
            <fullName>Non-structural protein 3</fullName>
        </alternativeName>
    </component>
    <component>
        <recommendedName>
            <fullName>Non-structural protein 4A</fullName>
            <shortName>NS4A</shortName>
        </recommendedName>
    </component>
    <component>
        <recommendedName>
            <fullName>Peptide 2k</fullName>
        </recommendedName>
    </component>
    <component>
        <recommendedName>
            <fullName>Non-structural protein 4B</fullName>
            <shortName>NS4B</shortName>
        </recommendedName>
    </component>
    <component>
        <recommendedName>
            <fullName>RNA-directed RNA polymerase NS5</fullName>
            <ecNumber evidence="18">2.1.1.56</ecNumber>
            <ecNumber evidence="18">2.1.1.57</ecNumber>
            <ecNumber evidence="14">2.7.7.48</ecNumber>
        </recommendedName>
        <alternativeName>
            <fullName>Non-structural protein 5</fullName>
        </alternativeName>
    </component>
</protein>
<feature type="chain" id="PRO_0000405228" description="Genome polyprotein">
    <location>
        <begin position="1"/>
        <end position="3387"/>
    </location>
</feature>
<feature type="chain" id="PRO_0000268117" description="Capsid protein C" evidence="7">
    <location>
        <begin position="1"/>
        <end position="99"/>
    </location>
</feature>
<feature type="propeptide" id="PRO_0000268118" description="ER anchor for the capsid protein C, removed in mature form by serine protease NS3" evidence="7">
    <location>
        <begin position="100"/>
        <end position="113"/>
    </location>
</feature>
<feature type="chain" id="PRO_0000268119" description="Protein prM" evidence="7">
    <location>
        <begin position="114"/>
        <end position="279"/>
    </location>
</feature>
<feature type="chain" id="PRO_0000268120" description="Peptide pr" evidence="7">
    <location>
        <begin position="114"/>
        <end position="204"/>
    </location>
</feature>
<feature type="chain" id="PRO_0000268121" description="Small envelope protein M" evidence="7">
    <location>
        <begin position="205"/>
        <end position="279"/>
    </location>
</feature>
<feature type="chain" id="PRO_0000268122" description="Envelope protein E" evidence="7">
    <location>
        <begin position="280"/>
        <end position="774"/>
    </location>
</feature>
<feature type="chain" id="PRO_0000268123" description="Non-structural protein 1" evidence="7">
    <location>
        <begin position="775"/>
        <end position="1126"/>
    </location>
</feature>
<feature type="chain" id="PRO_0000268124" description="Non-structural protein 2A" evidence="7">
    <location>
        <begin position="1127"/>
        <end position="1344"/>
    </location>
</feature>
<feature type="chain" id="PRO_0000268125" description="Serine protease subunit NS2B" evidence="7">
    <location>
        <begin position="1345"/>
        <end position="1474"/>
    </location>
</feature>
<feature type="chain" id="PRO_0000268126" description="Serine protease NS3" evidence="7">
    <location>
        <begin position="1475"/>
        <end position="2092"/>
    </location>
</feature>
<feature type="chain" id="PRO_0000268127" description="Non-structural protein 4A" evidence="7">
    <location>
        <begin position="2093"/>
        <end position="2219"/>
    </location>
</feature>
<feature type="peptide" id="PRO_0000268128" description="Peptide 2k" evidence="7">
    <location>
        <begin position="2220"/>
        <end position="2242"/>
    </location>
</feature>
<feature type="chain" id="PRO_0000268129" description="Non-structural protein 4B" evidence="7">
    <location>
        <begin position="2243"/>
        <end position="2487"/>
    </location>
</feature>
<feature type="chain" id="PRO_0000268130" description="RNA-directed RNA polymerase NS5" evidence="7">
    <location>
        <begin position="2488"/>
        <end position="3387"/>
    </location>
</feature>
<feature type="topological domain" description="Cytoplasmic" evidence="12">
    <location>
        <begin position="1"/>
        <end position="100"/>
    </location>
</feature>
<feature type="transmembrane region" description="Helical" evidence="12">
    <location>
        <begin position="101"/>
        <end position="117"/>
    </location>
</feature>
<feature type="topological domain" description="Extracellular" evidence="12">
    <location>
        <begin position="118"/>
        <end position="237"/>
    </location>
</feature>
<feature type="transmembrane region" description="Helical" evidence="12">
    <location>
        <begin position="238"/>
        <end position="258"/>
    </location>
</feature>
<feature type="topological domain" description="Cytoplasmic" evidence="12">
    <location>
        <begin position="259"/>
        <end position="265"/>
    </location>
</feature>
<feature type="transmembrane region" description="Helical" evidence="12">
    <location>
        <begin position="266"/>
        <end position="279"/>
    </location>
</feature>
<feature type="topological domain" description="Extracellular" evidence="12">
    <location>
        <begin position="280"/>
        <end position="723"/>
    </location>
</feature>
<feature type="transmembrane region" description="Helical" evidence="12">
    <location>
        <begin position="724"/>
        <end position="744"/>
    </location>
</feature>
<feature type="topological domain" description="Cytoplasmic" evidence="12">
    <location>
        <begin position="745"/>
        <end position="750"/>
    </location>
</feature>
<feature type="transmembrane region" description="Helical" evidence="12">
    <location>
        <begin position="751"/>
        <end position="771"/>
    </location>
</feature>
<feature type="topological domain" description="Extracellular" evidence="12">
    <location>
        <begin position="772"/>
        <end position="1194"/>
    </location>
</feature>
<feature type="transmembrane region" description="Helical" evidence="12">
    <location>
        <begin position="1195"/>
        <end position="1218"/>
    </location>
</feature>
<feature type="topological domain" description="Lumenal" evidence="12">
    <location>
        <begin position="1219"/>
        <end position="1224"/>
    </location>
</feature>
<feature type="transmembrane region" description="Helical" evidence="12">
    <location>
        <begin position="1225"/>
        <end position="1243"/>
    </location>
</feature>
<feature type="topological domain" description="Cytoplasmic" evidence="12">
    <location>
        <begin position="1244"/>
        <end position="1267"/>
    </location>
</feature>
<feature type="transmembrane region" description="Helical" evidence="12">
    <location>
        <begin position="1268"/>
        <end position="1288"/>
    </location>
</feature>
<feature type="topological domain" description="Lumenal" evidence="12">
    <location>
        <position position="1289"/>
    </location>
</feature>
<feature type="transmembrane region" description="Helical" evidence="12">
    <location>
        <begin position="1290"/>
        <end position="1308"/>
    </location>
</feature>
<feature type="topological domain" description="Lumenal" evidence="12">
    <location>
        <begin position="1309"/>
        <end position="1316"/>
    </location>
</feature>
<feature type="transmembrane region" description="Helical" evidence="12">
    <location>
        <begin position="1317"/>
        <end position="1337"/>
    </location>
</feature>
<feature type="topological domain" description="Cytoplasmic" evidence="12">
    <location>
        <begin position="1338"/>
        <end position="1345"/>
    </location>
</feature>
<feature type="transmembrane region" description="Helical" evidence="12">
    <location>
        <begin position="1346"/>
        <end position="1366"/>
    </location>
</feature>
<feature type="topological domain" description="Lumenal" evidence="12">
    <location>
        <begin position="1367"/>
        <end position="1369"/>
    </location>
</feature>
<feature type="transmembrane region" description="Helical" evidence="12">
    <location>
        <begin position="1370"/>
        <end position="1390"/>
    </location>
</feature>
<feature type="topological domain" description="Cytoplasmic" evidence="12">
    <location>
        <begin position="1391"/>
        <end position="1437"/>
    </location>
</feature>
<feature type="intramembrane region" description="Helical" evidence="12">
    <location>
        <begin position="1438"/>
        <end position="1458"/>
    </location>
</feature>
<feature type="topological domain" description="Cytoplasmic" evidence="12">
    <location>
        <begin position="1459"/>
        <end position="2143"/>
    </location>
</feature>
<feature type="transmembrane region" description="Helical" evidence="12">
    <location>
        <begin position="2144"/>
        <end position="2164"/>
    </location>
</feature>
<feature type="topological domain" description="Lumenal" evidence="12">
    <location>
        <begin position="2165"/>
        <end position="2169"/>
    </location>
</feature>
<feature type="intramembrane region" description="Helical" evidence="12">
    <location>
        <begin position="2170"/>
        <end position="2190"/>
    </location>
</feature>
<feature type="topological domain" description="Lumenal" evidence="12">
    <location>
        <position position="2191"/>
    </location>
</feature>
<feature type="transmembrane region" description="Helical" evidence="12">
    <location>
        <begin position="2192"/>
        <end position="2212"/>
    </location>
</feature>
<feature type="topological domain" description="Cytoplasmic" evidence="12">
    <location>
        <begin position="2213"/>
        <end position="2225"/>
    </location>
</feature>
<feature type="transmembrane region" description="Helical; Note=Signal for NS4B" evidence="12">
    <location>
        <begin position="2226"/>
        <end position="2246"/>
    </location>
</feature>
<feature type="topological domain" description="Lumenal" evidence="12">
    <location>
        <begin position="2247"/>
        <end position="2270"/>
    </location>
</feature>
<feature type="intramembrane region" description="Helical" evidence="12">
    <location>
        <begin position="2271"/>
        <end position="2291"/>
    </location>
</feature>
<feature type="topological domain" description="Lumenal" evidence="12">
    <location>
        <begin position="2292"/>
        <end position="2301"/>
    </location>
</feature>
<feature type="intramembrane region" description="Helical" evidence="12">
    <location>
        <begin position="2302"/>
        <end position="2322"/>
    </location>
</feature>
<feature type="topological domain" description="Lumenal" evidence="12">
    <location>
        <begin position="2323"/>
        <end position="2343"/>
    </location>
</feature>
<feature type="transmembrane region" description="Helical" evidence="12">
    <location>
        <begin position="2344"/>
        <end position="2364"/>
    </location>
</feature>
<feature type="topological domain" description="Cytoplasmic" evidence="12">
    <location>
        <begin position="2365"/>
        <end position="2409"/>
    </location>
</feature>
<feature type="transmembrane region" description="Helical" evidence="12">
    <location>
        <begin position="2410"/>
        <end position="2430"/>
    </location>
</feature>
<feature type="topological domain" description="Lumenal" evidence="12">
    <location>
        <begin position="2431"/>
        <end position="2455"/>
    </location>
</feature>
<feature type="transmembrane region" description="Helical" evidence="12">
    <location>
        <begin position="2456"/>
        <end position="2476"/>
    </location>
</feature>
<feature type="topological domain" description="Cytoplasmic" evidence="12">
    <location>
        <begin position="2477"/>
        <end position="3387"/>
    </location>
</feature>
<feature type="domain" description="Peptidase S7" evidence="17">
    <location>
        <begin position="1475"/>
        <end position="1652"/>
    </location>
</feature>
<feature type="domain" description="Helicase ATP-binding" evidence="15">
    <location>
        <begin position="1654"/>
        <end position="1810"/>
    </location>
</feature>
<feature type="domain" description="Helicase C-terminal">
    <location>
        <begin position="1820"/>
        <end position="1987"/>
    </location>
</feature>
<feature type="domain" description="mRNA cap 0-1 NS5-type MT" evidence="18">
    <location>
        <begin position="2489"/>
        <end position="2751"/>
    </location>
</feature>
<feature type="domain" description="RdRp catalytic" evidence="14">
    <location>
        <begin position="3016"/>
        <end position="3166"/>
    </location>
</feature>
<feature type="region of interest" description="Hydrophobic; homodimerization of capsid protein C" evidence="7">
    <location>
        <begin position="36"/>
        <end position="71"/>
    </location>
</feature>
<feature type="region of interest" description="Fusion peptide" evidence="4">
    <location>
        <begin position="377"/>
        <end position="390"/>
    </location>
</feature>
<feature type="region of interest" description="Interacts with and activates NS3 protease" evidence="16">
    <location>
        <begin position="1397"/>
        <end position="1436"/>
    </location>
</feature>
<feature type="region of interest" description="Important for RNA-binding" evidence="5">
    <location>
        <begin position="1658"/>
        <end position="1661"/>
    </location>
</feature>
<feature type="short sequence motif" description="DEAH box" evidence="15">
    <location>
        <begin position="1758"/>
        <end position="1761"/>
    </location>
</feature>
<feature type="short sequence motif" description="SUMO-interacting motif" evidence="7">
    <location>
        <begin position="2564"/>
        <end position="2567"/>
    </location>
</feature>
<feature type="active site" description="Charge relay system; for serine protease NS3 activity" evidence="17">
    <location>
        <position position="1525"/>
    </location>
</feature>
<feature type="active site" description="Charge relay system; for serine protease NS3 activity" evidence="17">
    <location>
        <position position="1549"/>
    </location>
</feature>
<feature type="active site" description="Charge relay system; for serine protease NS3 activity" evidence="17">
    <location>
        <position position="1609"/>
    </location>
</feature>
<feature type="active site" description="For 2'-O-MTase activity" evidence="10">
    <location>
        <position position="2548"/>
    </location>
</feature>
<feature type="active site" description="For 2'-O-MTase activity" evidence="10">
    <location>
        <position position="2633"/>
    </location>
</feature>
<feature type="active site" description="For 2'-O-MTase activity" evidence="10">
    <location>
        <position position="2668"/>
    </location>
</feature>
<feature type="active site" description="For 2'-O-MTase activity" evidence="10">
    <location>
        <position position="2704"/>
    </location>
</feature>
<feature type="binding site" evidence="15">
    <location>
        <begin position="1667"/>
        <end position="1674"/>
    </location>
    <ligand>
        <name>ATP</name>
        <dbReference type="ChEBI" id="CHEBI:30616"/>
    </ligand>
</feature>
<feature type="binding site" evidence="18">
    <location>
        <position position="2543"/>
    </location>
    <ligand>
        <name>S-adenosyl-L-methionine</name>
        <dbReference type="ChEBI" id="CHEBI:59789"/>
    </ligand>
</feature>
<feature type="binding site" evidence="18">
    <location>
        <position position="2573"/>
    </location>
    <ligand>
        <name>S-adenosyl-L-methionine</name>
        <dbReference type="ChEBI" id="CHEBI:59789"/>
    </ligand>
</feature>
<feature type="binding site" evidence="18">
    <location>
        <position position="2574"/>
    </location>
    <ligand>
        <name>S-adenosyl-L-methionine</name>
        <dbReference type="ChEBI" id="CHEBI:59789"/>
    </ligand>
</feature>
<feature type="binding site" evidence="18">
    <location>
        <position position="2591"/>
    </location>
    <ligand>
        <name>S-adenosyl-L-methionine</name>
        <dbReference type="ChEBI" id="CHEBI:59789"/>
    </ligand>
</feature>
<feature type="binding site" evidence="18">
    <location>
        <position position="2592"/>
    </location>
    <ligand>
        <name>S-adenosyl-L-methionine</name>
        <dbReference type="ChEBI" id="CHEBI:59789"/>
    </ligand>
</feature>
<feature type="binding site" evidence="18">
    <location>
        <position position="2618"/>
    </location>
    <ligand>
        <name>S-adenosyl-L-methionine</name>
        <dbReference type="ChEBI" id="CHEBI:59789"/>
    </ligand>
</feature>
<feature type="binding site" evidence="18">
    <location>
        <position position="2619"/>
    </location>
    <ligand>
        <name>S-adenosyl-L-methionine</name>
        <dbReference type="ChEBI" id="CHEBI:59789"/>
    </ligand>
</feature>
<feature type="binding site" evidence="18">
    <location>
        <position position="2634"/>
    </location>
    <ligand>
        <name>S-adenosyl-L-methionine</name>
        <dbReference type="ChEBI" id="CHEBI:59789"/>
    </ligand>
</feature>
<feature type="binding site" evidence="18">
    <location>
        <position position="2706"/>
    </location>
    <ligand>
        <name>S-adenosyl-L-methionine</name>
        <dbReference type="ChEBI" id="CHEBI:59789"/>
    </ligand>
</feature>
<feature type="binding site" evidence="10">
    <location>
        <position position="2925"/>
    </location>
    <ligand>
        <name>Zn(2+)</name>
        <dbReference type="ChEBI" id="CHEBI:29105"/>
        <label>1</label>
    </ligand>
</feature>
<feature type="binding site" evidence="10">
    <location>
        <position position="2929"/>
    </location>
    <ligand>
        <name>Zn(2+)</name>
        <dbReference type="ChEBI" id="CHEBI:29105"/>
        <label>1</label>
    </ligand>
</feature>
<feature type="binding site" evidence="10">
    <location>
        <position position="2934"/>
    </location>
    <ligand>
        <name>Zn(2+)</name>
        <dbReference type="ChEBI" id="CHEBI:29105"/>
        <label>1</label>
    </ligand>
</feature>
<feature type="binding site" evidence="10">
    <location>
        <position position="2937"/>
    </location>
    <ligand>
        <name>Zn(2+)</name>
        <dbReference type="ChEBI" id="CHEBI:29105"/>
        <label>1</label>
    </ligand>
</feature>
<feature type="binding site" evidence="10">
    <location>
        <position position="3200"/>
    </location>
    <ligand>
        <name>Zn(2+)</name>
        <dbReference type="ChEBI" id="CHEBI:29105"/>
        <label>2</label>
    </ligand>
</feature>
<feature type="binding site" evidence="10">
    <location>
        <position position="3216"/>
    </location>
    <ligand>
        <name>Zn(2+)</name>
        <dbReference type="ChEBI" id="CHEBI:29105"/>
        <label>2</label>
    </ligand>
</feature>
<feature type="binding site" evidence="10">
    <location>
        <position position="3335"/>
    </location>
    <ligand>
        <name>Zn(2+)</name>
        <dbReference type="ChEBI" id="CHEBI:29105"/>
        <label>2</label>
    </ligand>
</feature>
<feature type="site" description="Cleavage; by viral protease NS3" evidence="7">
    <location>
        <begin position="99"/>
        <end position="100"/>
    </location>
</feature>
<feature type="site" description="Cleavage; by host signal peptidase" evidence="7">
    <location>
        <begin position="113"/>
        <end position="114"/>
    </location>
</feature>
<feature type="site" description="Cleavage; by host furin" evidence="7 12">
    <location>
        <begin position="204"/>
        <end position="205"/>
    </location>
</feature>
<feature type="site" description="Cleavage; by host signal peptidase" evidence="7">
    <location>
        <begin position="279"/>
        <end position="280"/>
    </location>
</feature>
<feature type="site" description="Cleavage; by host signal peptidase" evidence="7">
    <location>
        <begin position="774"/>
        <end position="775"/>
    </location>
</feature>
<feature type="site" description="Cleavage; by host" evidence="7">
    <location>
        <begin position="1126"/>
        <end position="1127"/>
    </location>
</feature>
<feature type="site" description="Cleavage; by viral protease NS3" evidence="7">
    <location>
        <begin position="1344"/>
        <end position="1345"/>
    </location>
</feature>
<feature type="site" description="Cleavage; by autolysis" evidence="7">
    <location>
        <begin position="1474"/>
        <end position="1475"/>
    </location>
</feature>
<feature type="site" description="Involved in NS3 ATPase and RTPase activities" evidence="3">
    <location>
        <position position="1931"/>
    </location>
</feature>
<feature type="site" description="Involved in NS3 ATPase and RTPase activities" evidence="3">
    <location>
        <position position="1934"/>
    </location>
</feature>
<feature type="site" description="Cleavage; by autolysis" evidence="7">
    <location>
        <begin position="2092"/>
        <end position="2093"/>
    </location>
</feature>
<feature type="site" description="Cleavage; by viral protease NS3" evidence="7">
    <location>
        <begin position="2219"/>
        <end position="2220"/>
    </location>
</feature>
<feature type="site" description="Cleavage; by host signal peptidase" evidence="7">
    <location>
        <begin position="2242"/>
        <end position="2243"/>
    </location>
</feature>
<feature type="site" description="Cleavage; by viral protease NS3" evidence="7">
    <location>
        <begin position="2487"/>
        <end position="2488"/>
    </location>
</feature>
<feature type="site" description="mRNA cap binding" evidence="18">
    <location>
        <position position="2501"/>
    </location>
</feature>
<feature type="site" description="mRNA cap binding; via carbonyl oxygen" evidence="18">
    <location>
        <position position="2504"/>
    </location>
</feature>
<feature type="site" description="mRNA cap binding" evidence="18">
    <location>
        <position position="2505"/>
    </location>
</feature>
<feature type="site" description="mRNA cap binding; via carbonyl oxygen" evidence="18">
    <location>
        <position position="2507"/>
    </location>
</feature>
<feature type="site" description="mRNA cap binding" evidence="18">
    <location>
        <position position="2512"/>
    </location>
</feature>
<feature type="site" description="mRNA cap binding" evidence="18">
    <location>
        <position position="2516"/>
    </location>
</feature>
<feature type="site" description="Essential for 2'-O-methyltransferase activity" evidence="18">
    <location>
        <position position="2548"/>
    </location>
</feature>
<feature type="site" description="Essential for 2'-O-methyltransferase and N-7 methyltransferase activity" evidence="18">
    <location>
        <position position="2633"/>
    </location>
</feature>
<feature type="site" description="mRNA cap binding" evidence="18">
    <location>
        <position position="2637"/>
    </location>
</feature>
<feature type="site" description="Essential for 2'-O-methyltransferase activity" evidence="18">
    <location>
        <position position="2668"/>
    </location>
</feature>
<feature type="site" description="mRNA cap binding" evidence="18">
    <location>
        <position position="2699"/>
    </location>
</feature>
<feature type="site" description="mRNA cap binding" evidence="18">
    <location>
        <position position="2701"/>
    </location>
</feature>
<feature type="site" description="Essential for 2'-O-methyltransferase activity" evidence="18">
    <location>
        <position position="2704"/>
    </location>
</feature>
<feature type="modified residue" description="N6-acetyllysine; by host" evidence="9">
    <location>
        <position position="1862"/>
    </location>
</feature>
<feature type="modified residue" description="Phosphoserine" evidence="1">
    <location>
        <position position="2543"/>
    </location>
</feature>
<feature type="glycosylation site" description="N-linked (GlcNAc...) asparagine; by host" evidence="13">
    <location>
        <position position="182"/>
    </location>
</feature>
<feature type="glycosylation site" description="N-linked (GlcNAc...) asparagine; by host" evidence="13">
    <location>
        <position position="346"/>
    </location>
</feature>
<feature type="glycosylation site" description="N-linked (GlcNAc...) asparagine; by host" evidence="13">
    <location>
        <position position="432"/>
    </location>
</feature>
<feature type="glycosylation site" description="N-linked (GlcNAc...) asparagine; by host" evidence="13">
    <location>
        <position position="904"/>
    </location>
</feature>
<feature type="glycosylation site" description="N-linked (GlcNAc...) asparagine; by host" evidence="13">
    <location>
        <position position="981"/>
    </location>
</feature>
<feature type="glycosylation site" description="N-linked (GlcNAc...) asparagine; by host" evidence="13">
    <location>
        <position position="2297"/>
    </location>
</feature>
<feature type="glycosylation site" description="N-linked (GlcNAc...) asparagine; by host" evidence="13">
    <location>
        <position position="2301"/>
    </location>
</feature>
<feature type="glycosylation site" description="N-linked (GlcNAc...) asparagine; by host" evidence="13">
    <location>
        <position position="2453"/>
    </location>
</feature>
<feature type="disulfide bond" evidence="6">
    <location>
        <begin position="282"/>
        <end position="309"/>
    </location>
</feature>
<feature type="disulfide bond" evidence="6">
    <location>
        <begin position="339"/>
        <end position="400"/>
    </location>
</feature>
<feature type="disulfide bond" evidence="6">
    <location>
        <begin position="353"/>
        <end position="384"/>
    </location>
</feature>
<feature type="disulfide bond" evidence="6">
    <location>
        <begin position="371"/>
        <end position="395"/>
    </location>
</feature>
<feature type="disulfide bond" evidence="6">
    <location>
        <begin position="464"/>
        <end position="564"/>
    </location>
</feature>
<feature type="disulfide bond" evidence="6">
    <location>
        <begin position="581"/>
        <end position="612"/>
    </location>
</feature>
<feature type="disulfide bond" evidence="6">
    <location>
        <begin position="778"/>
        <end position="789"/>
    </location>
</feature>
<feature type="disulfide bond" evidence="6">
    <location>
        <begin position="829"/>
        <end position="917"/>
    </location>
</feature>
<feature type="disulfide bond" evidence="6">
    <location>
        <begin position="953"/>
        <end position="997"/>
    </location>
</feature>
<feature type="disulfide bond" evidence="6">
    <location>
        <begin position="1054"/>
        <end position="1103"/>
    </location>
</feature>
<feature type="disulfide bond" evidence="6">
    <location>
        <begin position="1065"/>
        <end position="1087"/>
    </location>
</feature>
<feature type="disulfide bond" evidence="6">
    <location>
        <begin position="1086"/>
        <end position="1090"/>
    </location>
</feature>
<evidence type="ECO:0000250" key="1">
    <source>
        <dbReference type="UniProtKB" id="P03314"/>
    </source>
</evidence>
<evidence type="ECO:0000250" key="2">
    <source>
        <dbReference type="UniProtKB" id="P09866"/>
    </source>
</evidence>
<evidence type="ECO:0000250" key="3">
    <source>
        <dbReference type="UniProtKB" id="P14335"/>
    </source>
</evidence>
<evidence type="ECO:0000250" key="4">
    <source>
        <dbReference type="UniProtKB" id="P14336"/>
    </source>
</evidence>
<evidence type="ECO:0000250" key="5">
    <source>
        <dbReference type="UniProtKB" id="P14340"/>
    </source>
</evidence>
<evidence type="ECO:0000250" key="6">
    <source>
        <dbReference type="UniProtKB" id="P17763"/>
    </source>
</evidence>
<evidence type="ECO:0000250" key="7">
    <source>
        <dbReference type="UniProtKB" id="P29990"/>
    </source>
</evidence>
<evidence type="ECO:0000250" key="8">
    <source>
        <dbReference type="UniProtKB" id="P29991"/>
    </source>
</evidence>
<evidence type="ECO:0000250" key="9">
    <source>
        <dbReference type="UniProtKB" id="Q32ZE1"/>
    </source>
</evidence>
<evidence type="ECO:0000250" key="10">
    <source>
        <dbReference type="UniProtKB" id="Q6YMS4"/>
    </source>
</evidence>
<evidence type="ECO:0000250" key="11">
    <source>
        <dbReference type="UniProtKB" id="Q9Q6P4"/>
    </source>
</evidence>
<evidence type="ECO:0000255" key="12"/>
<evidence type="ECO:0000255" key="13">
    <source>
        <dbReference type="PROSITE-ProRule" id="PRU00498"/>
    </source>
</evidence>
<evidence type="ECO:0000255" key="14">
    <source>
        <dbReference type="PROSITE-ProRule" id="PRU00539"/>
    </source>
</evidence>
<evidence type="ECO:0000255" key="15">
    <source>
        <dbReference type="PROSITE-ProRule" id="PRU00541"/>
    </source>
</evidence>
<evidence type="ECO:0000255" key="16">
    <source>
        <dbReference type="PROSITE-ProRule" id="PRU00859"/>
    </source>
</evidence>
<evidence type="ECO:0000255" key="17">
    <source>
        <dbReference type="PROSITE-ProRule" id="PRU00860"/>
    </source>
</evidence>
<evidence type="ECO:0000255" key="18">
    <source>
        <dbReference type="PROSITE-ProRule" id="PRU00924"/>
    </source>
</evidence>